<feature type="chain" id="PRO_0000068713" description="Bifunctional protein GlmU">
    <location>
        <begin position="1"/>
        <end position="450"/>
    </location>
</feature>
<feature type="region of interest" description="Pyrophosphorylase" evidence="1">
    <location>
        <begin position="1"/>
        <end position="229"/>
    </location>
</feature>
<feature type="region of interest" description="Linker" evidence="1">
    <location>
        <begin position="230"/>
        <end position="250"/>
    </location>
</feature>
<feature type="region of interest" description="N-acetyltransferase" evidence="1">
    <location>
        <begin position="251"/>
        <end position="450"/>
    </location>
</feature>
<feature type="active site" description="Proton acceptor" evidence="1">
    <location>
        <position position="362"/>
    </location>
</feature>
<feature type="binding site" evidence="1">
    <location>
        <begin position="8"/>
        <end position="11"/>
    </location>
    <ligand>
        <name>UDP-N-acetyl-alpha-D-glucosamine</name>
        <dbReference type="ChEBI" id="CHEBI:57705"/>
    </ligand>
</feature>
<feature type="binding site" evidence="1">
    <location>
        <position position="22"/>
    </location>
    <ligand>
        <name>UDP-N-acetyl-alpha-D-glucosamine</name>
        <dbReference type="ChEBI" id="CHEBI:57705"/>
    </ligand>
</feature>
<feature type="binding site" evidence="1">
    <location>
        <position position="72"/>
    </location>
    <ligand>
        <name>UDP-N-acetyl-alpha-D-glucosamine</name>
        <dbReference type="ChEBI" id="CHEBI:57705"/>
    </ligand>
</feature>
<feature type="binding site" evidence="1">
    <location>
        <begin position="77"/>
        <end position="78"/>
    </location>
    <ligand>
        <name>UDP-N-acetyl-alpha-D-glucosamine</name>
        <dbReference type="ChEBI" id="CHEBI:57705"/>
    </ligand>
</feature>
<feature type="binding site" evidence="1">
    <location>
        <position position="102"/>
    </location>
    <ligand>
        <name>Mg(2+)</name>
        <dbReference type="ChEBI" id="CHEBI:18420"/>
    </ligand>
</feature>
<feature type="binding site" evidence="1">
    <location>
        <position position="139"/>
    </location>
    <ligand>
        <name>UDP-N-acetyl-alpha-D-glucosamine</name>
        <dbReference type="ChEBI" id="CHEBI:57705"/>
    </ligand>
</feature>
<feature type="binding site" evidence="1">
    <location>
        <position position="154"/>
    </location>
    <ligand>
        <name>UDP-N-acetyl-alpha-D-glucosamine</name>
        <dbReference type="ChEBI" id="CHEBI:57705"/>
    </ligand>
</feature>
<feature type="binding site" evidence="1">
    <location>
        <position position="227"/>
    </location>
    <ligand>
        <name>Mg(2+)</name>
        <dbReference type="ChEBI" id="CHEBI:18420"/>
    </ligand>
</feature>
<feature type="binding site" evidence="1">
    <location>
        <position position="227"/>
    </location>
    <ligand>
        <name>UDP-N-acetyl-alpha-D-glucosamine</name>
        <dbReference type="ChEBI" id="CHEBI:57705"/>
    </ligand>
</feature>
<feature type="binding site" evidence="1">
    <location>
        <position position="332"/>
    </location>
    <ligand>
        <name>UDP-N-acetyl-alpha-D-glucosamine</name>
        <dbReference type="ChEBI" id="CHEBI:57705"/>
    </ligand>
</feature>
<feature type="binding site" evidence="1">
    <location>
        <position position="350"/>
    </location>
    <ligand>
        <name>UDP-N-acetyl-alpha-D-glucosamine</name>
        <dbReference type="ChEBI" id="CHEBI:57705"/>
    </ligand>
</feature>
<feature type="binding site" evidence="1">
    <location>
        <position position="365"/>
    </location>
    <ligand>
        <name>UDP-N-acetyl-alpha-D-glucosamine</name>
        <dbReference type="ChEBI" id="CHEBI:57705"/>
    </ligand>
</feature>
<feature type="binding site" evidence="1">
    <location>
        <position position="376"/>
    </location>
    <ligand>
        <name>UDP-N-acetyl-alpha-D-glucosamine</name>
        <dbReference type="ChEBI" id="CHEBI:57705"/>
    </ligand>
</feature>
<feature type="binding site" evidence="1">
    <location>
        <begin position="385"/>
        <end position="386"/>
    </location>
    <ligand>
        <name>acetyl-CoA</name>
        <dbReference type="ChEBI" id="CHEBI:57288"/>
    </ligand>
</feature>
<feature type="binding site" evidence="1">
    <location>
        <position position="422"/>
    </location>
    <ligand>
        <name>acetyl-CoA</name>
        <dbReference type="ChEBI" id="CHEBI:57288"/>
    </ligand>
</feature>
<feature type="binding site" evidence="1">
    <location>
        <position position="439"/>
    </location>
    <ligand>
        <name>acetyl-CoA</name>
        <dbReference type="ChEBI" id="CHEBI:57288"/>
    </ligand>
</feature>
<organism>
    <name type="scientific">Staphylococcus aureus (strain MW2)</name>
    <dbReference type="NCBI Taxonomy" id="196620"/>
    <lineage>
        <taxon>Bacteria</taxon>
        <taxon>Bacillati</taxon>
        <taxon>Bacillota</taxon>
        <taxon>Bacilli</taxon>
        <taxon>Bacillales</taxon>
        <taxon>Staphylococcaceae</taxon>
        <taxon>Staphylococcus</taxon>
    </lineage>
</organism>
<sequence length="450" mass="48533">MRRHAIILAAGKGTRMKSKKYKVLHEVAGKPMVEHVLESVKGSGVDQVVTIVGHGAESVKGHLGERSLYSFQEEQLGTAHAVQMAKSHLEDKEGTTIVVCGDTPLITKETLETLIAHHEDANAQATVLSASIQQPYGYGRIVRNASGRLERIVEEKDATQAEKDINEISSGIFAFNNKTLFEKLTQVKNDNAQGEYYLPDVLSLILNDGGIVEVYRTNDVEEIMGVNDRVMLSQAEKAMQRRTNHYHMLNGVTIIDPDSTYIGPDVTIGSDTVIEPGVRINGRTEIGEDVVIGQYSEINNSTIENGACIQQSVVNDASVGANTKVGPFAQLRPGAQLGADVKVGNFVEIKKADLKDGAKVSHLSYIGDAVIGERTNIGCGTITVNYDGENKFKTIVGKDSFVGCNVNLVAPVTIGDDVLVAAGSTITDDVPNDSLAVARARQTTKEGYRK</sequence>
<reference key="1">
    <citation type="journal article" date="2002" name="Lancet">
        <title>Genome and virulence determinants of high virulence community-acquired MRSA.</title>
        <authorList>
            <person name="Baba T."/>
            <person name="Takeuchi F."/>
            <person name="Kuroda M."/>
            <person name="Yuzawa H."/>
            <person name="Aoki K."/>
            <person name="Oguchi A."/>
            <person name="Nagai Y."/>
            <person name="Iwama N."/>
            <person name="Asano K."/>
            <person name="Naimi T."/>
            <person name="Kuroda H."/>
            <person name="Cui L."/>
            <person name="Yamamoto K."/>
            <person name="Hiramatsu K."/>
        </authorList>
    </citation>
    <scope>NUCLEOTIDE SEQUENCE [LARGE SCALE GENOMIC DNA]</scope>
    <source>
        <strain>MW2</strain>
    </source>
</reference>
<comment type="function">
    <text evidence="1">Catalyzes the last two sequential reactions in the de novo biosynthetic pathway for UDP-N-acetylglucosamine (UDP-GlcNAc). The C-terminal domain catalyzes the transfer of acetyl group from acetyl coenzyme A to glucosamine-1-phosphate (GlcN-1-P) to produce N-acetylglucosamine-1-phosphate (GlcNAc-1-P), which is converted into UDP-GlcNAc by the transfer of uridine 5-monophosphate (from uridine 5-triphosphate), a reaction catalyzed by the N-terminal domain.</text>
</comment>
<comment type="catalytic activity">
    <reaction evidence="1">
        <text>alpha-D-glucosamine 1-phosphate + acetyl-CoA = N-acetyl-alpha-D-glucosamine 1-phosphate + CoA + H(+)</text>
        <dbReference type="Rhea" id="RHEA:13725"/>
        <dbReference type="ChEBI" id="CHEBI:15378"/>
        <dbReference type="ChEBI" id="CHEBI:57287"/>
        <dbReference type="ChEBI" id="CHEBI:57288"/>
        <dbReference type="ChEBI" id="CHEBI:57776"/>
        <dbReference type="ChEBI" id="CHEBI:58516"/>
        <dbReference type="EC" id="2.3.1.157"/>
    </reaction>
</comment>
<comment type="catalytic activity">
    <reaction evidence="1">
        <text>N-acetyl-alpha-D-glucosamine 1-phosphate + UTP + H(+) = UDP-N-acetyl-alpha-D-glucosamine + diphosphate</text>
        <dbReference type="Rhea" id="RHEA:13509"/>
        <dbReference type="ChEBI" id="CHEBI:15378"/>
        <dbReference type="ChEBI" id="CHEBI:33019"/>
        <dbReference type="ChEBI" id="CHEBI:46398"/>
        <dbReference type="ChEBI" id="CHEBI:57705"/>
        <dbReference type="ChEBI" id="CHEBI:57776"/>
        <dbReference type="EC" id="2.7.7.23"/>
    </reaction>
</comment>
<comment type="cofactor">
    <cofactor evidence="1">
        <name>Mg(2+)</name>
        <dbReference type="ChEBI" id="CHEBI:18420"/>
    </cofactor>
    <text evidence="1">Binds 1 Mg(2+) ion per subunit.</text>
</comment>
<comment type="pathway">
    <text evidence="1">Nucleotide-sugar biosynthesis; UDP-N-acetyl-alpha-D-glucosamine biosynthesis; N-acetyl-alpha-D-glucosamine 1-phosphate from alpha-D-glucosamine 6-phosphate (route II): step 2/2.</text>
</comment>
<comment type="pathway">
    <text evidence="1">Nucleotide-sugar biosynthesis; UDP-N-acetyl-alpha-D-glucosamine biosynthesis; UDP-N-acetyl-alpha-D-glucosamine from N-acetyl-alpha-D-glucosamine 1-phosphate: step 1/1.</text>
</comment>
<comment type="pathway">
    <text evidence="1">Bacterial outer membrane biogenesis; LPS lipid A biosynthesis.</text>
</comment>
<comment type="subunit">
    <text evidence="1">Homotrimer.</text>
</comment>
<comment type="subcellular location">
    <subcellularLocation>
        <location evidence="1">Cytoplasm</location>
    </subcellularLocation>
</comment>
<comment type="similarity">
    <text evidence="1">In the N-terminal section; belongs to the N-acetylglucosamine-1-phosphate uridyltransferase family.</text>
</comment>
<comment type="similarity">
    <text evidence="1">In the C-terminal section; belongs to the transferase hexapeptide repeat family.</text>
</comment>
<gene>
    <name evidence="1" type="primary">glmU</name>
    <name type="synonym">gcaD</name>
    <name type="ordered locus">MW0454</name>
</gene>
<protein>
    <recommendedName>
        <fullName evidence="1">Bifunctional protein GlmU</fullName>
    </recommendedName>
    <domain>
        <recommendedName>
            <fullName evidence="1">UDP-N-acetylglucosamine pyrophosphorylase</fullName>
            <ecNumber evidence="1">2.7.7.23</ecNumber>
        </recommendedName>
        <alternativeName>
            <fullName evidence="1">N-acetylglucosamine-1-phosphate uridyltransferase</fullName>
        </alternativeName>
    </domain>
    <domain>
        <recommendedName>
            <fullName evidence="1">Glucosamine-1-phosphate N-acetyltransferase</fullName>
            <ecNumber evidence="1">2.3.1.157</ecNumber>
        </recommendedName>
    </domain>
</protein>
<accession>Q8NXZ7</accession>
<name>GLMU_STAAW</name>
<keyword id="KW-0012">Acyltransferase</keyword>
<keyword id="KW-0133">Cell shape</keyword>
<keyword id="KW-0961">Cell wall biogenesis/degradation</keyword>
<keyword id="KW-0963">Cytoplasm</keyword>
<keyword id="KW-0460">Magnesium</keyword>
<keyword id="KW-0479">Metal-binding</keyword>
<keyword id="KW-0511">Multifunctional enzyme</keyword>
<keyword id="KW-0548">Nucleotidyltransferase</keyword>
<keyword id="KW-0573">Peptidoglycan synthesis</keyword>
<keyword id="KW-0677">Repeat</keyword>
<keyword id="KW-0808">Transferase</keyword>
<evidence type="ECO:0000255" key="1">
    <source>
        <dbReference type="HAMAP-Rule" id="MF_01631"/>
    </source>
</evidence>
<proteinExistence type="inferred from homology"/>
<dbReference type="EC" id="2.7.7.23" evidence="1"/>
<dbReference type="EC" id="2.3.1.157" evidence="1"/>
<dbReference type="EMBL" id="BA000033">
    <property type="protein sequence ID" value="BAB94319.1"/>
    <property type="molecule type" value="Genomic_DNA"/>
</dbReference>
<dbReference type="RefSeq" id="WP_001252529.1">
    <property type="nucleotide sequence ID" value="NC_003923.1"/>
</dbReference>
<dbReference type="SMR" id="Q8NXZ7"/>
<dbReference type="KEGG" id="sam:MW0454"/>
<dbReference type="HOGENOM" id="CLU_029499_15_2_9"/>
<dbReference type="UniPathway" id="UPA00113">
    <property type="reaction ID" value="UER00532"/>
</dbReference>
<dbReference type="UniPathway" id="UPA00113">
    <property type="reaction ID" value="UER00533"/>
</dbReference>
<dbReference type="UniPathway" id="UPA00973"/>
<dbReference type="GO" id="GO:0005737">
    <property type="term" value="C:cytoplasm"/>
    <property type="evidence" value="ECO:0007669"/>
    <property type="project" value="UniProtKB-SubCell"/>
</dbReference>
<dbReference type="GO" id="GO:0016020">
    <property type="term" value="C:membrane"/>
    <property type="evidence" value="ECO:0007669"/>
    <property type="project" value="GOC"/>
</dbReference>
<dbReference type="GO" id="GO:0019134">
    <property type="term" value="F:glucosamine-1-phosphate N-acetyltransferase activity"/>
    <property type="evidence" value="ECO:0007669"/>
    <property type="project" value="UniProtKB-UniRule"/>
</dbReference>
<dbReference type="GO" id="GO:0000287">
    <property type="term" value="F:magnesium ion binding"/>
    <property type="evidence" value="ECO:0007669"/>
    <property type="project" value="UniProtKB-UniRule"/>
</dbReference>
<dbReference type="GO" id="GO:0003977">
    <property type="term" value="F:UDP-N-acetylglucosamine diphosphorylase activity"/>
    <property type="evidence" value="ECO:0007669"/>
    <property type="project" value="UniProtKB-UniRule"/>
</dbReference>
<dbReference type="GO" id="GO:0000902">
    <property type="term" value="P:cell morphogenesis"/>
    <property type="evidence" value="ECO:0007669"/>
    <property type="project" value="UniProtKB-UniRule"/>
</dbReference>
<dbReference type="GO" id="GO:0071555">
    <property type="term" value="P:cell wall organization"/>
    <property type="evidence" value="ECO:0007669"/>
    <property type="project" value="UniProtKB-KW"/>
</dbReference>
<dbReference type="GO" id="GO:0009245">
    <property type="term" value="P:lipid A biosynthetic process"/>
    <property type="evidence" value="ECO:0007669"/>
    <property type="project" value="UniProtKB-UniRule"/>
</dbReference>
<dbReference type="GO" id="GO:0009252">
    <property type="term" value="P:peptidoglycan biosynthetic process"/>
    <property type="evidence" value="ECO:0007669"/>
    <property type="project" value="UniProtKB-UniRule"/>
</dbReference>
<dbReference type="GO" id="GO:0008360">
    <property type="term" value="P:regulation of cell shape"/>
    <property type="evidence" value="ECO:0007669"/>
    <property type="project" value="UniProtKB-KW"/>
</dbReference>
<dbReference type="GO" id="GO:0006048">
    <property type="term" value="P:UDP-N-acetylglucosamine biosynthetic process"/>
    <property type="evidence" value="ECO:0007669"/>
    <property type="project" value="UniProtKB-UniPathway"/>
</dbReference>
<dbReference type="CDD" id="cd02540">
    <property type="entry name" value="GT2_GlmU_N_bac"/>
    <property type="match status" value="1"/>
</dbReference>
<dbReference type="CDD" id="cd03353">
    <property type="entry name" value="LbH_GlmU_C"/>
    <property type="match status" value="1"/>
</dbReference>
<dbReference type="Gene3D" id="2.160.10.10">
    <property type="entry name" value="Hexapeptide repeat proteins"/>
    <property type="match status" value="1"/>
</dbReference>
<dbReference type="Gene3D" id="3.90.550.10">
    <property type="entry name" value="Spore Coat Polysaccharide Biosynthesis Protein SpsA, Chain A"/>
    <property type="match status" value="1"/>
</dbReference>
<dbReference type="HAMAP" id="MF_01631">
    <property type="entry name" value="GlmU"/>
    <property type="match status" value="1"/>
</dbReference>
<dbReference type="InterPro" id="IPR005882">
    <property type="entry name" value="Bifunctional_GlmU"/>
</dbReference>
<dbReference type="InterPro" id="IPR050065">
    <property type="entry name" value="GlmU-like"/>
</dbReference>
<dbReference type="InterPro" id="IPR038009">
    <property type="entry name" value="GlmU_C_LbH"/>
</dbReference>
<dbReference type="InterPro" id="IPR001451">
    <property type="entry name" value="Hexapep"/>
</dbReference>
<dbReference type="InterPro" id="IPR018357">
    <property type="entry name" value="Hexapep_transf_CS"/>
</dbReference>
<dbReference type="InterPro" id="IPR005835">
    <property type="entry name" value="NTP_transferase_dom"/>
</dbReference>
<dbReference type="InterPro" id="IPR029044">
    <property type="entry name" value="Nucleotide-diphossugar_trans"/>
</dbReference>
<dbReference type="InterPro" id="IPR011004">
    <property type="entry name" value="Trimer_LpxA-like_sf"/>
</dbReference>
<dbReference type="NCBIfam" id="TIGR01173">
    <property type="entry name" value="glmU"/>
    <property type="match status" value="1"/>
</dbReference>
<dbReference type="NCBIfam" id="NF010934">
    <property type="entry name" value="PRK14354.1"/>
    <property type="match status" value="1"/>
</dbReference>
<dbReference type="PANTHER" id="PTHR43584:SF3">
    <property type="entry name" value="BIFUNCTIONAL PROTEIN GLMU"/>
    <property type="match status" value="1"/>
</dbReference>
<dbReference type="PANTHER" id="PTHR43584">
    <property type="entry name" value="NUCLEOTIDYL TRANSFERASE"/>
    <property type="match status" value="1"/>
</dbReference>
<dbReference type="Pfam" id="PF00132">
    <property type="entry name" value="Hexapep"/>
    <property type="match status" value="2"/>
</dbReference>
<dbReference type="Pfam" id="PF00483">
    <property type="entry name" value="NTP_transferase"/>
    <property type="match status" value="1"/>
</dbReference>
<dbReference type="SUPFAM" id="SSF53448">
    <property type="entry name" value="Nucleotide-diphospho-sugar transferases"/>
    <property type="match status" value="1"/>
</dbReference>
<dbReference type="SUPFAM" id="SSF51161">
    <property type="entry name" value="Trimeric LpxA-like enzymes"/>
    <property type="match status" value="1"/>
</dbReference>
<dbReference type="PROSITE" id="PS00101">
    <property type="entry name" value="HEXAPEP_TRANSFERASES"/>
    <property type="match status" value="1"/>
</dbReference>